<protein>
    <recommendedName>
        <fullName evidence="1">Octanoyltransferase</fullName>
        <ecNumber evidence="1">2.3.1.181</ecNumber>
    </recommendedName>
    <alternativeName>
        <fullName evidence="1">Lipoate-protein ligase B</fullName>
    </alternativeName>
    <alternativeName>
        <fullName evidence="1">Lipoyl/octanoyl transferase</fullName>
    </alternativeName>
    <alternativeName>
        <fullName evidence="1">Octanoyl-[acyl-carrier-protein]-protein N-octanoyltransferase</fullName>
    </alternativeName>
</protein>
<keyword id="KW-0012">Acyltransferase</keyword>
<keyword id="KW-0963">Cytoplasm</keyword>
<keyword id="KW-1185">Reference proteome</keyword>
<keyword id="KW-0808">Transferase</keyword>
<accession>Q146F2</accession>
<gene>
    <name evidence="1" type="primary">lipB</name>
    <name type="ordered locus">Bxeno_A0249</name>
    <name type="ORF">Bxe_A4213</name>
</gene>
<evidence type="ECO:0000255" key="1">
    <source>
        <dbReference type="HAMAP-Rule" id="MF_00013"/>
    </source>
</evidence>
<evidence type="ECO:0000255" key="2">
    <source>
        <dbReference type="PROSITE-ProRule" id="PRU01067"/>
    </source>
</evidence>
<name>LIPB_PARXL</name>
<reference key="1">
    <citation type="journal article" date="2006" name="Proc. Natl. Acad. Sci. U.S.A.">
        <title>Burkholderia xenovorans LB400 harbors a multi-replicon, 9.73-Mbp genome shaped for versatility.</title>
        <authorList>
            <person name="Chain P.S.G."/>
            <person name="Denef V.J."/>
            <person name="Konstantinidis K.T."/>
            <person name="Vergez L.M."/>
            <person name="Agullo L."/>
            <person name="Reyes V.L."/>
            <person name="Hauser L."/>
            <person name="Cordova M."/>
            <person name="Gomez L."/>
            <person name="Gonzalez M."/>
            <person name="Land M."/>
            <person name="Lao V."/>
            <person name="Larimer F."/>
            <person name="LiPuma J.J."/>
            <person name="Mahenthiralingam E."/>
            <person name="Malfatti S.A."/>
            <person name="Marx C.J."/>
            <person name="Parnell J.J."/>
            <person name="Ramette A."/>
            <person name="Richardson P."/>
            <person name="Seeger M."/>
            <person name="Smith D."/>
            <person name="Spilker T."/>
            <person name="Sul W.J."/>
            <person name="Tsoi T.V."/>
            <person name="Ulrich L.E."/>
            <person name="Zhulin I.B."/>
            <person name="Tiedje J.M."/>
        </authorList>
    </citation>
    <scope>NUCLEOTIDE SEQUENCE [LARGE SCALE GENOMIC DNA]</scope>
    <source>
        <strain>LB400</strain>
    </source>
</reference>
<sequence length="241" mass="25193">MCATPVSPTPLPATAPLALRWRGTEPYEASFEAMRAFTDGRTAETPDEIWLVEHPPVFTLGQAGDPAHLLAADSGIPLVKVDRGGQITYHGPGQVVAYLLLDLRRRKLMVRELVTRIEQAVIDTLAAYNLAGERKAGAPGIYVAPGPAAGSHAGAKIAALGLKIRNGCSYHGVSLNVNMDLRPFLAINPCGYAGLETVDMATLGVTAGWNDVARTFAACLTANLDGSPAAVAQPQAGALTA</sequence>
<proteinExistence type="inferred from homology"/>
<comment type="function">
    <text evidence="1">Catalyzes the transfer of endogenously produced octanoic acid from octanoyl-acyl-carrier-protein onto the lipoyl domains of lipoate-dependent enzymes. Lipoyl-ACP can also act as a substrate although octanoyl-ACP is likely to be the physiological substrate.</text>
</comment>
<comment type="catalytic activity">
    <reaction evidence="1">
        <text>octanoyl-[ACP] + L-lysyl-[protein] = N(6)-octanoyl-L-lysyl-[protein] + holo-[ACP] + H(+)</text>
        <dbReference type="Rhea" id="RHEA:17665"/>
        <dbReference type="Rhea" id="RHEA-COMP:9636"/>
        <dbReference type="Rhea" id="RHEA-COMP:9685"/>
        <dbReference type="Rhea" id="RHEA-COMP:9752"/>
        <dbReference type="Rhea" id="RHEA-COMP:9928"/>
        <dbReference type="ChEBI" id="CHEBI:15378"/>
        <dbReference type="ChEBI" id="CHEBI:29969"/>
        <dbReference type="ChEBI" id="CHEBI:64479"/>
        <dbReference type="ChEBI" id="CHEBI:78463"/>
        <dbReference type="ChEBI" id="CHEBI:78809"/>
        <dbReference type="EC" id="2.3.1.181"/>
    </reaction>
</comment>
<comment type="pathway">
    <text evidence="1">Protein modification; protein lipoylation via endogenous pathway; protein N(6)-(lipoyl)lysine from octanoyl-[acyl-carrier-protein]: step 1/2.</text>
</comment>
<comment type="subcellular location">
    <subcellularLocation>
        <location evidence="1">Cytoplasm</location>
    </subcellularLocation>
</comment>
<comment type="miscellaneous">
    <text evidence="1">In the reaction, the free carboxyl group of octanoic acid is attached via an amide linkage to the epsilon-amino group of a specific lysine residue of lipoyl domains of lipoate-dependent enzymes.</text>
</comment>
<comment type="similarity">
    <text evidence="1">Belongs to the LipB family.</text>
</comment>
<organism>
    <name type="scientific">Paraburkholderia xenovorans (strain LB400)</name>
    <dbReference type="NCBI Taxonomy" id="266265"/>
    <lineage>
        <taxon>Bacteria</taxon>
        <taxon>Pseudomonadati</taxon>
        <taxon>Pseudomonadota</taxon>
        <taxon>Betaproteobacteria</taxon>
        <taxon>Burkholderiales</taxon>
        <taxon>Burkholderiaceae</taxon>
        <taxon>Paraburkholderia</taxon>
    </lineage>
</organism>
<feature type="chain" id="PRO_0000321628" description="Octanoyltransferase">
    <location>
        <begin position="1"/>
        <end position="241"/>
    </location>
</feature>
<feature type="domain" description="BPL/LPL catalytic" evidence="2">
    <location>
        <begin position="43"/>
        <end position="228"/>
    </location>
</feature>
<feature type="active site" description="Acyl-thioester intermediate" evidence="1">
    <location>
        <position position="190"/>
    </location>
</feature>
<feature type="binding site" evidence="1">
    <location>
        <begin position="83"/>
        <end position="90"/>
    </location>
    <ligand>
        <name>substrate</name>
    </ligand>
</feature>
<feature type="binding site" evidence="1">
    <location>
        <begin position="159"/>
        <end position="161"/>
    </location>
    <ligand>
        <name>substrate</name>
    </ligand>
</feature>
<feature type="binding site" evidence="1">
    <location>
        <begin position="172"/>
        <end position="174"/>
    </location>
    <ligand>
        <name>substrate</name>
    </ligand>
</feature>
<feature type="site" description="Lowers pKa of active site Cys" evidence="1">
    <location>
        <position position="156"/>
    </location>
</feature>
<dbReference type="EC" id="2.3.1.181" evidence="1"/>
<dbReference type="EMBL" id="CP000270">
    <property type="protein sequence ID" value="ABE28787.1"/>
    <property type="molecule type" value="Genomic_DNA"/>
</dbReference>
<dbReference type="RefSeq" id="WP_011486628.1">
    <property type="nucleotide sequence ID" value="NC_007951.1"/>
</dbReference>
<dbReference type="SMR" id="Q146F2"/>
<dbReference type="STRING" id="266265.Bxe_A4213"/>
<dbReference type="KEGG" id="bxb:DR64_1890"/>
<dbReference type="KEGG" id="bxe:Bxe_A4213"/>
<dbReference type="PATRIC" id="fig|266265.5.peg.263"/>
<dbReference type="eggNOG" id="COG0321">
    <property type="taxonomic scope" value="Bacteria"/>
</dbReference>
<dbReference type="OrthoDB" id="9787061at2"/>
<dbReference type="UniPathway" id="UPA00538">
    <property type="reaction ID" value="UER00592"/>
</dbReference>
<dbReference type="Proteomes" id="UP000001817">
    <property type="component" value="Chromosome 1"/>
</dbReference>
<dbReference type="GO" id="GO:0005737">
    <property type="term" value="C:cytoplasm"/>
    <property type="evidence" value="ECO:0007669"/>
    <property type="project" value="UniProtKB-SubCell"/>
</dbReference>
<dbReference type="GO" id="GO:0033819">
    <property type="term" value="F:lipoyl(octanoyl) transferase activity"/>
    <property type="evidence" value="ECO:0007669"/>
    <property type="project" value="UniProtKB-EC"/>
</dbReference>
<dbReference type="GO" id="GO:0036211">
    <property type="term" value="P:protein modification process"/>
    <property type="evidence" value="ECO:0007669"/>
    <property type="project" value="InterPro"/>
</dbReference>
<dbReference type="CDD" id="cd16444">
    <property type="entry name" value="LipB"/>
    <property type="match status" value="1"/>
</dbReference>
<dbReference type="FunFam" id="3.30.930.10:FF:000020">
    <property type="entry name" value="Octanoyltransferase"/>
    <property type="match status" value="1"/>
</dbReference>
<dbReference type="Gene3D" id="3.30.930.10">
    <property type="entry name" value="Bira Bifunctional Protein, Domain 2"/>
    <property type="match status" value="1"/>
</dbReference>
<dbReference type="HAMAP" id="MF_00013">
    <property type="entry name" value="LipB"/>
    <property type="match status" value="1"/>
</dbReference>
<dbReference type="InterPro" id="IPR045864">
    <property type="entry name" value="aa-tRNA-synth_II/BPL/LPL"/>
</dbReference>
<dbReference type="InterPro" id="IPR004143">
    <property type="entry name" value="BPL_LPL_catalytic"/>
</dbReference>
<dbReference type="InterPro" id="IPR000544">
    <property type="entry name" value="Octanoyltransferase"/>
</dbReference>
<dbReference type="InterPro" id="IPR020605">
    <property type="entry name" value="Octanoyltransferase_CS"/>
</dbReference>
<dbReference type="NCBIfam" id="TIGR00214">
    <property type="entry name" value="lipB"/>
    <property type="match status" value="1"/>
</dbReference>
<dbReference type="NCBIfam" id="NF010922">
    <property type="entry name" value="PRK14342.1"/>
    <property type="match status" value="1"/>
</dbReference>
<dbReference type="NCBIfam" id="NF010923">
    <property type="entry name" value="PRK14343.1"/>
    <property type="match status" value="1"/>
</dbReference>
<dbReference type="PANTHER" id="PTHR10993:SF7">
    <property type="entry name" value="LIPOYLTRANSFERASE 2, MITOCHONDRIAL-RELATED"/>
    <property type="match status" value="1"/>
</dbReference>
<dbReference type="PANTHER" id="PTHR10993">
    <property type="entry name" value="OCTANOYLTRANSFERASE"/>
    <property type="match status" value="1"/>
</dbReference>
<dbReference type="Pfam" id="PF21948">
    <property type="entry name" value="LplA-B_cat"/>
    <property type="match status" value="1"/>
</dbReference>
<dbReference type="PIRSF" id="PIRSF016262">
    <property type="entry name" value="LPLase"/>
    <property type="match status" value="1"/>
</dbReference>
<dbReference type="SUPFAM" id="SSF55681">
    <property type="entry name" value="Class II aaRS and biotin synthetases"/>
    <property type="match status" value="1"/>
</dbReference>
<dbReference type="PROSITE" id="PS51733">
    <property type="entry name" value="BPL_LPL_CATALYTIC"/>
    <property type="match status" value="1"/>
</dbReference>
<dbReference type="PROSITE" id="PS01313">
    <property type="entry name" value="LIPB"/>
    <property type="match status" value="1"/>
</dbReference>